<dbReference type="EC" id="2.7.7.101" evidence="1"/>
<dbReference type="EMBL" id="AL123456">
    <property type="protein sequence ID" value="CCP45131.1"/>
    <property type="molecule type" value="Genomic_DNA"/>
</dbReference>
<dbReference type="PIR" id="H70661">
    <property type="entry name" value="H70661"/>
</dbReference>
<dbReference type="RefSeq" id="NP_216859.1">
    <property type="nucleotide sequence ID" value="NC_000962.3"/>
</dbReference>
<dbReference type="RefSeq" id="WP_003412049.1">
    <property type="nucleotide sequence ID" value="NZ_NVQJ01000012.1"/>
</dbReference>
<dbReference type="PDB" id="5W33">
    <property type="method" value="X-ray"/>
    <property type="resolution" value="2.85 A"/>
    <property type="chains" value="A=112-432"/>
</dbReference>
<dbReference type="PDB" id="5W34">
    <property type="method" value="X-ray"/>
    <property type="resolution" value="2.95 A"/>
    <property type="chains" value="A/B=112-432"/>
</dbReference>
<dbReference type="PDB" id="5W35">
    <property type="method" value="X-ray"/>
    <property type="resolution" value="3.31 A"/>
    <property type="chains" value="A/B=112-432"/>
</dbReference>
<dbReference type="PDB" id="5W36">
    <property type="method" value="X-ray"/>
    <property type="resolution" value="2.46 A"/>
    <property type="chains" value="A/B=112-432"/>
</dbReference>
<dbReference type="PDBsum" id="5W33"/>
<dbReference type="PDBsum" id="5W34"/>
<dbReference type="PDBsum" id="5W35"/>
<dbReference type="PDBsum" id="5W36"/>
<dbReference type="SMR" id="P9WNW1"/>
<dbReference type="FunCoup" id="P9WNW1">
    <property type="interactions" value="39"/>
</dbReference>
<dbReference type="STRING" id="83332.Rv2343c"/>
<dbReference type="PaxDb" id="83332-Rv2343c"/>
<dbReference type="DNASU" id="885996"/>
<dbReference type="GeneID" id="885996"/>
<dbReference type="KEGG" id="mtu:Rv2343c"/>
<dbReference type="KEGG" id="mtv:RVBD_2343c"/>
<dbReference type="TubercuList" id="Rv2343c"/>
<dbReference type="eggNOG" id="COG0358">
    <property type="taxonomic scope" value="Bacteria"/>
</dbReference>
<dbReference type="InParanoid" id="P9WNW1"/>
<dbReference type="OrthoDB" id="9803773at2"/>
<dbReference type="PhylomeDB" id="P9WNW1"/>
<dbReference type="BRENDA" id="2.7.7.101">
    <property type="organism ID" value="3445"/>
</dbReference>
<dbReference type="Proteomes" id="UP000001584">
    <property type="component" value="Chromosome"/>
</dbReference>
<dbReference type="GO" id="GO:0005737">
    <property type="term" value="C:cytoplasm"/>
    <property type="evidence" value="ECO:0000318"/>
    <property type="project" value="GO_Central"/>
</dbReference>
<dbReference type="GO" id="GO:0000428">
    <property type="term" value="C:DNA-directed RNA polymerase complex"/>
    <property type="evidence" value="ECO:0007669"/>
    <property type="project" value="UniProtKB-KW"/>
</dbReference>
<dbReference type="GO" id="GO:0005886">
    <property type="term" value="C:plasma membrane"/>
    <property type="evidence" value="ECO:0007005"/>
    <property type="project" value="MTBBASE"/>
</dbReference>
<dbReference type="GO" id="GO:1990077">
    <property type="term" value="C:primosome complex"/>
    <property type="evidence" value="ECO:0007669"/>
    <property type="project" value="UniProtKB-KW"/>
</dbReference>
<dbReference type="GO" id="GO:0003677">
    <property type="term" value="F:DNA binding"/>
    <property type="evidence" value="ECO:0007669"/>
    <property type="project" value="UniProtKB-KW"/>
</dbReference>
<dbReference type="GO" id="GO:0003899">
    <property type="term" value="F:DNA-directed RNA polymerase activity"/>
    <property type="evidence" value="ECO:0007669"/>
    <property type="project" value="InterPro"/>
</dbReference>
<dbReference type="GO" id="GO:0008270">
    <property type="term" value="F:zinc ion binding"/>
    <property type="evidence" value="ECO:0007669"/>
    <property type="project" value="UniProtKB-UniRule"/>
</dbReference>
<dbReference type="GO" id="GO:0006269">
    <property type="term" value="P:DNA replication, synthesis of primer"/>
    <property type="evidence" value="ECO:0000318"/>
    <property type="project" value="GO_Central"/>
</dbReference>
<dbReference type="CDD" id="cd03364">
    <property type="entry name" value="TOPRIM_DnaG_primases"/>
    <property type="match status" value="1"/>
</dbReference>
<dbReference type="FunFam" id="3.40.1360.10:FF:000004">
    <property type="entry name" value="DNA primase"/>
    <property type="match status" value="1"/>
</dbReference>
<dbReference type="FunFam" id="3.90.580.10:FF:000001">
    <property type="entry name" value="DNA primase"/>
    <property type="match status" value="1"/>
</dbReference>
<dbReference type="FunFam" id="3.90.980.10:FF:000001">
    <property type="entry name" value="DNA primase"/>
    <property type="match status" value="1"/>
</dbReference>
<dbReference type="Gene3D" id="3.40.1360.10">
    <property type="match status" value="1"/>
</dbReference>
<dbReference type="Gene3D" id="3.90.980.10">
    <property type="entry name" value="DNA primase, catalytic core, N-terminal domain"/>
    <property type="match status" value="1"/>
</dbReference>
<dbReference type="Gene3D" id="3.90.580.10">
    <property type="entry name" value="Zinc finger, CHC2-type domain"/>
    <property type="match status" value="1"/>
</dbReference>
<dbReference type="HAMAP" id="MF_00974">
    <property type="entry name" value="DNA_primase_DnaG"/>
    <property type="match status" value="1"/>
</dbReference>
<dbReference type="InterPro" id="IPR037068">
    <property type="entry name" value="DNA_primase_core_N_sf"/>
</dbReference>
<dbReference type="InterPro" id="IPR019475">
    <property type="entry name" value="DNA_primase_DnaB-bd"/>
</dbReference>
<dbReference type="InterPro" id="IPR006295">
    <property type="entry name" value="DNA_primase_DnaG"/>
</dbReference>
<dbReference type="InterPro" id="IPR013173">
    <property type="entry name" value="DNA_primase_DnaG_DnaB-bd_dom"/>
</dbReference>
<dbReference type="InterPro" id="IPR036977">
    <property type="entry name" value="DNA_primase_Znf_CHC2"/>
</dbReference>
<dbReference type="InterPro" id="IPR030846">
    <property type="entry name" value="DnaG_bac"/>
</dbReference>
<dbReference type="InterPro" id="IPR013264">
    <property type="entry name" value="DNAG_N"/>
</dbReference>
<dbReference type="InterPro" id="IPR050219">
    <property type="entry name" value="DnaG_primase"/>
</dbReference>
<dbReference type="InterPro" id="IPR034151">
    <property type="entry name" value="TOPRIM_DnaG_bac"/>
</dbReference>
<dbReference type="InterPro" id="IPR006171">
    <property type="entry name" value="TOPRIM_dom"/>
</dbReference>
<dbReference type="InterPro" id="IPR002694">
    <property type="entry name" value="Znf_CHC2"/>
</dbReference>
<dbReference type="NCBIfam" id="TIGR01391">
    <property type="entry name" value="dnaG"/>
    <property type="match status" value="1"/>
</dbReference>
<dbReference type="PANTHER" id="PTHR30313">
    <property type="entry name" value="DNA PRIMASE"/>
    <property type="match status" value="1"/>
</dbReference>
<dbReference type="PANTHER" id="PTHR30313:SF2">
    <property type="entry name" value="DNA PRIMASE"/>
    <property type="match status" value="1"/>
</dbReference>
<dbReference type="Pfam" id="PF10410">
    <property type="entry name" value="DnaB_bind"/>
    <property type="match status" value="1"/>
</dbReference>
<dbReference type="Pfam" id="PF08278">
    <property type="entry name" value="DnaG_DnaB_bind"/>
    <property type="match status" value="1"/>
</dbReference>
<dbReference type="Pfam" id="PF08275">
    <property type="entry name" value="DNAG_N"/>
    <property type="match status" value="1"/>
</dbReference>
<dbReference type="Pfam" id="PF13662">
    <property type="entry name" value="Toprim_4"/>
    <property type="match status" value="1"/>
</dbReference>
<dbReference type="Pfam" id="PF01807">
    <property type="entry name" value="Zn_ribbon_DnaG"/>
    <property type="match status" value="1"/>
</dbReference>
<dbReference type="PIRSF" id="PIRSF002811">
    <property type="entry name" value="DnaG"/>
    <property type="match status" value="1"/>
</dbReference>
<dbReference type="SMART" id="SM00766">
    <property type="entry name" value="DnaG_DnaB_bind"/>
    <property type="match status" value="1"/>
</dbReference>
<dbReference type="SMART" id="SM00493">
    <property type="entry name" value="TOPRIM"/>
    <property type="match status" value="1"/>
</dbReference>
<dbReference type="SMART" id="SM00400">
    <property type="entry name" value="ZnF_CHCC"/>
    <property type="match status" value="1"/>
</dbReference>
<dbReference type="SUPFAM" id="SSF56731">
    <property type="entry name" value="DNA primase core"/>
    <property type="match status" value="1"/>
</dbReference>
<dbReference type="SUPFAM" id="SSF57783">
    <property type="entry name" value="Zinc beta-ribbon"/>
    <property type="match status" value="1"/>
</dbReference>
<dbReference type="PROSITE" id="PS50880">
    <property type="entry name" value="TOPRIM"/>
    <property type="match status" value="1"/>
</dbReference>
<organism>
    <name type="scientific">Mycobacterium tuberculosis (strain ATCC 25618 / H37Rv)</name>
    <dbReference type="NCBI Taxonomy" id="83332"/>
    <lineage>
        <taxon>Bacteria</taxon>
        <taxon>Bacillati</taxon>
        <taxon>Actinomycetota</taxon>
        <taxon>Actinomycetes</taxon>
        <taxon>Mycobacteriales</taxon>
        <taxon>Mycobacteriaceae</taxon>
        <taxon>Mycobacterium</taxon>
        <taxon>Mycobacterium tuberculosis complex</taxon>
    </lineage>
</organism>
<feature type="chain" id="PRO_0000180506" description="DNA primase">
    <location>
        <begin position="1"/>
        <end position="639"/>
    </location>
</feature>
<feature type="domain" description="Toprim" evidence="1">
    <location>
        <begin position="262"/>
        <end position="348"/>
    </location>
</feature>
<feature type="zinc finger region" description="CHC2-type" evidence="1">
    <location>
        <begin position="41"/>
        <end position="65"/>
    </location>
</feature>
<feature type="region of interest" description="Disordered" evidence="2">
    <location>
        <begin position="460"/>
        <end position="479"/>
    </location>
</feature>
<feature type="binding site" evidence="1">
    <location>
        <position position="268"/>
    </location>
    <ligand>
        <name>Mg(2+)</name>
        <dbReference type="ChEBI" id="CHEBI:18420"/>
        <label>1</label>
        <note>catalytic</note>
    </ligand>
</feature>
<feature type="binding site" evidence="1">
    <location>
        <position position="319"/>
    </location>
    <ligand>
        <name>Mg(2+)</name>
        <dbReference type="ChEBI" id="CHEBI:18420"/>
        <label>1</label>
        <note>catalytic</note>
    </ligand>
</feature>
<feature type="binding site" evidence="1">
    <location>
        <position position="319"/>
    </location>
    <ligand>
        <name>Mg(2+)</name>
        <dbReference type="ChEBI" id="CHEBI:18420"/>
        <label>2</label>
    </ligand>
</feature>
<feature type="binding site" evidence="1">
    <location>
        <position position="321"/>
    </location>
    <ligand>
        <name>Mg(2+)</name>
        <dbReference type="ChEBI" id="CHEBI:18420"/>
        <label>2</label>
    </ligand>
</feature>
<feature type="helix" evidence="6">
    <location>
        <begin position="114"/>
        <end position="131"/>
    </location>
</feature>
<feature type="helix" evidence="5">
    <location>
        <begin position="135"/>
        <end position="137"/>
    </location>
</feature>
<feature type="helix" evidence="6">
    <location>
        <begin position="138"/>
        <end position="145"/>
    </location>
</feature>
<feature type="turn" evidence="6">
    <location>
        <begin position="146"/>
        <end position="148"/>
    </location>
</feature>
<feature type="helix" evidence="6">
    <location>
        <begin position="151"/>
        <end position="156"/>
    </location>
</feature>
<feature type="strand" evidence="6">
    <location>
        <begin position="160"/>
        <end position="162"/>
    </location>
</feature>
<feature type="strand" evidence="6">
    <location>
        <begin position="164"/>
        <end position="167"/>
    </location>
</feature>
<feature type="helix" evidence="6">
    <location>
        <begin position="168"/>
        <end position="175"/>
    </location>
</feature>
<feature type="helix" evidence="6">
    <location>
        <begin position="180"/>
        <end position="185"/>
    </location>
</feature>
<feature type="strand" evidence="6">
    <location>
        <begin position="188"/>
        <end position="192"/>
    </location>
</feature>
<feature type="strand" evidence="6">
    <location>
        <begin position="195"/>
        <end position="199"/>
    </location>
</feature>
<feature type="strand" evidence="6">
    <location>
        <begin position="202"/>
        <end position="209"/>
    </location>
</feature>
<feature type="strand" evidence="6">
    <location>
        <begin position="215"/>
        <end position="222"/>
    </location>
</feature>
<feature type="strand" evidence="6">
    <location>
        <begin position="232"/>
        <end position="235"/>
    </location>
</feature>
<feature type="turn" evidence="6">
    <location>
        <begin position="244"/>
        <end position="246"/>
    </location>
</feature>
<feature type="helix" evidence="6">
    <location>
        <begin position="251"/>
        <end position="261"/>
    </location>
</feature>
<feature type="strand" evidence="6">
    <location>
        <begin position="263"/>
        <end position="266"/>
    </location>
</feature>
<feature type="helix" evidence="6">
    <location>
        <begin position="270"/>
        <end position="278"/>
    </location>
</feature>
<feature type="strand" evidence="6">
    <location>
        <begin position="284"/>
        <end position="290"/>
    </location>
</feature>
<feature type="helix" evidence="6">
    <location>
        <begin position="294"/>
        <end position="304"/>
    </location>
</feature>
<feature type="turn" evidence="6">
    <location>
        <begin position="305"/>
        <end position="309"/>
    </location>
</feature>
<feature type="strand" evidence="6">
    <location>
        <begin position="313"/>
        <end position="321"/>
    </location>
</feature>
<feature type="helix" evidence="6">
    <location>
        <begin position="322"/>
        <end position="330"/>
    </location>
</feature>
<feature type="strand" evidence="6">
    <location>
        <begin position="333"/>
        <end position="335"/>
    </location>
</feature>
<feature type="turn" evidence="6">
    <location>
        <begin position="337"/>
        <end position="341"/>
    </location>
</feature>
<feature type="strand" evidence="6">
    <location>
        <begin position="342"/>
        <end position="346"/>
    </location>
</feature>
<feature type="helix" evidence="6">
    <location>
        <begin position="348"/>
        <end position="350"/>
    </location>
</feature>
<feature type="helix" evidence="6">
    <location>
        <begin position="353"/>
        <end position="370"/>
    </location>
</feature>
<feature type="helix" evidence="6">
    <location>
        <begin position="375"/>
        <end position="384"/>
    </location>
</feature>
<feature type="helix" evidence="6">
    <location>
        <begin position="392"/>
        <end position="407"/>
    </location>
</feature>
<feature type="helix" evidence="6">
    <location>
        <begin position="412"/>
        <end position="426"/>
    </location>
</feature>
<protein>
    <recommendedName>
        <fullName evidence="1">DNA primase</fullName>
        <ecNumber evidence="1">2.7.7.101</ecNumber>
    </recommendedName>
</protein>
<reference key="1">
    <citation type="journal article" date="1998" name="Nature">
        <title>Deciphering the biology of Mycobacterium tuberculosis from the complete genome sequence.</title>
        <authorList>
            <person name="Cole S.T."/>
            <person name="Brosch R."/>
            <person name="Parkhill J."/>
            <person name="Garnier T."/>
            <person name="Churcher C.M."/>
            <person name="Harris D.E."/>
            <person name="Gordon S.V."/>
            <person name="Eiglmeier K."/>
            <person name="Gas S."/>
            <person name="Barry C.E. III"/>
            <person name="Tekaia F."/>
            <person name="Badcock K."/>
            <person name="Basham D."/>
            <person name="Brown D."/>
            <person name="Chillingworth T."/>
            <person name="Connor R."/>
            <person name="Davies R.M."/>
            <person name="Devlin K."/>
            <person name="Feltwell T."/>
            <person name="Gentles S."/>
            <person name="Hamlin N."/>
            <person name="Holroyd S."/>
            <person name="Hornsby T."/>
            <person name="Jagels K."/>
            <person name="Krogh A."/>
            <person name="McLean J."/>
            <person name="Moule S."/>
            <person name="Murphy L.D."/>
            <person name="Oliver S."/>
            <person name="Osborne J."/>
            <person name="Quail M.A."/>
            <person name="Rajandream M.A."/>
            <person name="Rogers J."/>
            <person name="Rutter S."/>
            <person name="Seeger K."/>
            <person name="Skelton S."/>
            <person name="Squares S."/>
            <person name="Squares R."/>
            <person name="Sulston J.E."/>
            <person name="Taylor K."/>
            <person name="Whitehead S."/>
            <person name="Barrell B.G."/>
        </authorList>
    </citation>
    <scope>NUCLEOTIDE SEQUENCE [LARGE SCALE GENOMIC DNA]</scope>
    <source>
        <strain>ATCC 25618 / H37Rv</strain>
    </source>
</reference>
<reference key="2">
    <citation type="journal article" date="2008" name="BMC Syst. Biol.">
        <title>targetTB: a target identification pipeline for Mycobacterium tuberculosis through an interactome, reactome and genome-scale structural analysis.</title>
        <authorList>
            <person name="Raman K."/>
            <person name="Yeturu K."/>
            <person name="Chandra N."/>
        </authorList>
    </citation>
    <scope>IDENTIFICATION AS A DRUG TARGET [LARGE SCALE ANALYSIS]</scope>
</reference>
<reference key="3">
    <citation type="journal article" date="2011" name="Mol. Cell. Proteomics">
        <title>Proteogenomic analysis of Mycobacterium tuberculosis by high resolution mass spectrometry.</title>
        <authorList>
            <person name="Kelkar D.S."/>
            <person name="Kumar D."/>
            <person name="Kumar P."/>
            <person name="Balakrishnan L."/>
            <person name="Muthusamy B."/>
            <person name="Yadav A.K."/>
            <person name="Shrivastava P."/>
            <person name="Marimuthu A."/>
            <person name="Anand S."/>
            <person name="Sundaram H."/>
            <person name="Kingsbury R."/>
            <person name="Harsha H.C."/>
            <person name="Nair B."/>
            <person name="Prasad T.S."/>
            <person name="Chauhan D.S."/>
            <person name="Katoch K."/>
            <person name="Katoch V.M."/>
            <person name="Kumar P."/>
            <person name="Chaerkady R."/>
            <person name="Ramachandran S."/>
            <person name="Dash D."/>
            <person name="Pandey A."/>
        </authorList>
    </citation>
    <scope>IDENTIFICATION BY MASS SPECTROMETRY [LARGE SCALE ANALYSIS]</scope>
    <source>
        <strain>ATCC 25618 / H37Rv</strain>
    </source>
</reference>
<reference key="4">
    <citation type="journal article" date="2020" name="Mol. Microbiol.">
        <title>Depletion of the DarG antitoxin in Mycobacterium tuberculosis triggers the DNA-damage response and leads to cell death.</title>
        <authorList>
            <person name="Zaveri A."/>
            <person name="Wang R."/>
            <person name="Botella L."/>
            <person name="Sharma R."/>
            <person name="Zhu L."/>
            <person name="Wallach J.B."/>
            <person name="Song N."/>
            <person name="Jansen R.S."/>
            <person name="Rhee K.Y."/>
            <person name="Ehrt S."/>
            <person name="Schnappinger D."/>
        </authorList>
    </citation>
    <scope>SUBUNIT</scope>
    <source>
        <strain>H37Rv</strain>
    </source>
</reference>
<evidence type="ECO:0000255" key="1">
    <source>
        <dbReference type="HAMAP-Rule" id="MF_00974"/>
    </source>
</evidence>
<evidence type="ECO:0000256" key="2">
    <source>
        <dbReference type="SAM" id="MobiDB-lite"/>
    </source>
</evidence>
<evidence type="ECO:0000269" key="3">
    <source>
    </source>
</evidence>
<evidence type="ECO:0000269" key="4">
    <source>
    </source>
</evidence>
<evidence type="ECO:0007829" key="5">
    <source>
        <dbReference type="PDB" id="5W33"/>
    </source>
</evidence>
<evidence type="ECO:0007829" key="6">
    <source>
        <dbReference type="PDB" id="5W36"/>
    </source>
</evidence>
<name>DNAG_MYCTU</name>
<proteinExistence type="evidence at protein level"/>
<comment type="function">
    <text evidence="1">RNA polymerase that catalyzes the synthesis of short RNA molecules used as primers for DNA polymerase during DNA replication.</text>
</comment>
<comment type="catalytic activity">
    <reaction evidence="1">
        <text>ssDNA + n NTP = ssDNA/pppN(pN)n-1 hybrid + (n-1) diphosphate.</text>
        <dbReference type="EC" id="2.7.7.101"/>
    </reaction>
</comment>
<comment type="cofactor">
    <cofactor evidence="1">
        <name>Zn(2+)</name>
        <dbReference type="ChEBI" id="CHEBI:29105"/>
    </cofactor>
    <text evidence="1">Binds 1 zinc ion per monomer.</text>
</comment>
<comment type="cofactor">
    <cofactor evidence="1">
        <name>Mg(2+)</name>
        <dbReference type="ChEBI" id="CHEBI:18420"/>
    </cofactor>
    <text evidence="1">Binds two Mg(2+) per subunit.</text>
</comment>
<comment type="subunit">
    <text evidence="1 4">Monomer. Interacts with DnaB (By similarity). Co-immunoprecipitates with DarG in the presence and absence of darT (PubMed:32634279).</text>
</comment>
<comment type="domain">
    <text evidence="1">Contains an N-terminal zinc-binding domain, a central core domain that contains the primase activity, and a C-terminal DnaB-binding domain.</text>
</comment>
<comment type="miscellaneous">
    <text evidence="3">Was identified as a high-confidence drug target.</text>
</comment>
<comment type="similarity">
    <text evidence="1">Belongs to the DnaG primase family.</text>
</comment>
<sequence length="639" mass="69593">MSGRISDRDIAAIREGARIEDVVGDYVQLRRAGADSLKGLCPFHNEKSPSFHVRPNHGHFHCFGCGEGGDVYAFIQKIEHVSFVEAVELLADRIGHTISYTGAATSVQRDRGSRSRLLAANAAAAAFYAQALQSDEAAPARQYLTERSFDAAAARKFGCGFAPSGWDSLTKHLQRKGFEFEELEAAGLSRQGRHGPMDRFHRRLLWPIRTSAGEVVGFGARRLFDDDAMEAKYVNTPETLLYKKSSVMFGIDLAKRDIAKGHQAVVVEGYTDVMAMHLAGVTTAVASCGTAFGGEHLAMLRRLMMDDSFFRGELIYVFDGDEAGRAAALKAFDGEQKLAGQSFVAVAPDGMDPCDLRLKCGDAALRDLVARRTPLFEFAIRAAIAEMDLDSAEGRVAALRRCVPMVGQIKDPTLRDEYARQLAGWVGWADVAQVIGRVRGEAKRTKHPRLGRLGSTTIARAAQRPTAGPPTELAVRPDPRDPTLWPQREALKSALQYPALAGPVFDALTVEGFTHPEYAAVRAAIDTAGGTSAGLSGAQWLDMVRQQTTSTVTSALISELGVEAIQVDDDKLPRYIAGVLARLQEVWLGRQIAEVKSKLQRMSPIEQGDEYHALFGDLVAMEAYRRSLLEQASGDDLTA</sequence>
<keyword id="KW-0002">3D-structure</keyword>
<keyword id="KW-0235">DNA replication</keyword>
<keyword id="KW-0238">DNA-binding</keyword>
<keyword id="KW-0240">DNA-directed RNA polymerase</keyword>
<keyword id="KW-0460">Magnesium</keyword>
<keyword id="KW-0479">Metal-binding</keyword>
<keyword id="KW-0548">Nucleotidyltransferase</keyword>
<keyword id="KW-0639">Primosome</keyword>
<keyword id="KW-1185">Reference proteome</keyword>
<keyword id="KW-0804">Transcription</keyword>
<keyword id="KW-0808">Transferase</keyword>
<keyword id="KW-0862">Zinc</keyword>
<keyword id="KW-0863">Zinc-finger</keyword>
<gene>
    <name evidence="1" type="primary">dnaG</name>
    <name type="ordered locus">Rv2343c</name>
    <name type="ORF">MTCY98.12c</name>
</gene>
<accession>P9WNW1</accession>
<accession>L0TC89</accession>
<accession>P63962</accession>
<accession>P95239</accession>